<evidence type="ECO:0000250" key="1"/>
<evidence type="ECO:0000255" key="2">
    <source>
        <dbReference type="HAMAP-Rule" id="MF_00100"/>
    </source>
</evidence>
<evidence type="ECO:0000256" key="3">
    <source>
        <dbReference type="SAM" id="MobiDB-lite"/>
    </source>
</evidence>
<dbReference type="EMBL" id="CP001131">
    <property type="protein sequence ID" value="ACG72395.1"/>
    <property type="molecule type" value="Genomic_DNA"/>
</dbReference>
<dbReference type="RefSeq" id="WP_012525221.1">
    <property type="nucleotide sequence ID" value="NC_011145.1"/>
</dbReference>
<dbReference type="SMR" id="B4UHG0"/>
<dbReference type="KEGG" id="ank:AnaeK_1162"/>
<dbReference type="HOGENOM" id="CLU_006301_9_3_7"/>
<dbReference type="OrthoDB" id="9811804at2"/>
<dbReference type="Proteomes" id="UP000001871">
    <property type="component" value="Chromosome"/>
</dbReference>
<dbReference type="GO" id="GO:0005829">
    <property type="term" value="C:cytosol"/>
    <property type="evidence" value="ECO:0007669"/>
    <property type="project" value="TreeGrafter"/>
</dbReference>
<dbReference type="GO" id="GO:0005525">
    <property type="term" value="F:GTP binding"/>
    <property type="evidence" value="ECO:0007669"/>
    <property type="project" value="UniProtKB-KW"/>
</dbReference>
<dbReference type="GO" id="GO:0003924">
    <property type="term" value="F:GTPase activity"/>
    <property type="evidence" value="ECO:0007669"/>
    <property type="project" value="UniProtKB-UniRule"/>
</dbReference>
<dbReference type="GO" id="GO:0003743">
    <property type="term" value="F:translation initiation factor activity"/>
    <property type="evidence" value="ECO:0007669"/>
    <property type="project" value="UniProtKB-UniRule"/>
</dbReference>
<dbReference type="CDD" id="cd01887">
    <property type="entry name" value="IF2_eIF5B"/>
    <property type="match status" value="1"/>
</dbReference>
<dbReference type="CDD" id="cd03702">
    <property type="entry name" value="IF2_mtIF2_II"/>
    <property type="match status" value="1"/>
</dbReference>
<dbReference type="CDD" id="cd03692">
    <property type="entry name" value="mtIF2_IVc"/>
    <property type="match status" value="1"/>
</dbReference>
<dbReference type="FunFam" id="2.40.30.10:FF:000007">
    <property type="entry name" value="Translation initiation factor IF-2"/>
    <property type="match status" value="1"/>
</dbReference>
<dbReference type="FunFam" id="2.40.30.10:FF:000008">
    <property type="entry name" value="Translation initiation factor IF-2"/>
    <property type="match status" value="1"/>
</dbReference>
<dbReference type="FunFam" id="3.40.50.10050:FF:000001">
    <property type="entry name" value="Translation initiation factor IF-2"/>
    <property type="match status" value="1"/>
</dbReference>
<dbReference type="FunFam" id="3.40.50.300:FF:000019">
    <property type="entry name" value="Translation initiation factor IF-2"/>
    <property type="match status" value="1"/>
</dbReference>
<dbReference type="Gene3D" id="1.10.10.2480">
    <property type="match status" value="1"/>
</dbReference>
<dbReference type="Gene3D" id="3.40.50.300">
    <property type="entry name" value="P-loop containing nucleotide triphosphate hydrolases"/>
    <property type="match status" value="1"/>
</dbReference>
<dbReference type="Gene3D" id="2.40.30.10">
    <property type="entry name" value="Translation factors"/>
    <property type="match status" value="2"/>
</dbReference>
<dbReference type="Gene3D" id="3.40.50.10050">
    <property type="entry name" value="Translation initiation factor IF- 2, domain 3"/>
    <property type="match status" value="1"/>
</dbReference>
<dbReference type="HAMAP" id="MF_00100_B">
    <property type="entry name" value="IF_2_B"/>
    <property type="match status" value="1"/>
</dbReference>
<dbReference type="InterPro" id="IPR053905">
    <property type="entry name" value="EF-G-like_DII"/>
</dbReference>
<dbReference type="InterPro" id="IPR044145">
    <property type="entry name" value="IF2_II"/>
</dbReference>
<dbReference type="InterPro" id="IPR006847">
    <property type="entry name" value="IF2_N"/>
</dbReference>
<dbReference type="InterPro" id="IPR027417">
    <property type="entry name" value="P-loop_NTPase"/>
</dbReference>
<dbReference type="InterPro" id="IPR005225">
    <property type="entry name" value="Small_GTP-bd"/>
</dbReference>
<dbReference type="InterPro" id="IPR000795">
    <property type="entry name" value="T_Tr_GTP-bd_dom"/>
</dbReference>
<dbReference type="InterPro" id="IPR000178">
    <property type="entry name" value="TF_IF2_bacterial-like"/>
</dbReference>
<dbReference type="InterPro" id="IPR015760">
    <property type="entry name" value="TIF_IF2"/>
</dbReference>
<dbReference type="InterPro" id="IPR023115">
    <property type="entry name" value="TIF_IF2_dom3"/>
</dbReference>
<dbReference type="InterPro" id="IPR036925">
    <property type="entry name" value="TIF_IF2_dom3_sf"/>
</dbReference>
<dbReference type="InterPro" id="IPR009000">
    <property type="entry name" value="Transl_B-barrel_sf"/>
</dbReference>
<dbReference type="NCBIfam" id="TIGR00487">
    <property type="entry name" value="IF-2"/>
    <property type="match status" value="1"/>
</dbReference>
<dbReference type="NCBIfam" id="TIGR00231">
    <property type="entry name" value="small_GTP"/>
    <property type="match status" value="1"/>
</dbReference>
<dbReference type="PANTHER" id="PTHR43381:SF5">
    <property type="entry name" value="TR-TYPE G DOMAIN-CONTAINING PROTEIN"/>
    <property type="match status" value="1"/>
</dbReference>
<dbReference type="PANTHER" id="PTHR43381">
    <property type="entry name" value="TRANSLATION INITIATION FACTOR IF-2-RELATED"/>
    <property type="match status" value="1"/>
</dbReference>
<dbReference type="Pfam" id="PF22042">
    <property type="entry name" value="EF-G_D2"/>
    <property type="match status" value="1"/>
</dbReference>
<dbReference type="Pfam" id="PF00009">
    <property type="entry name" value="GTP_EFTU"/>
    <property type="match status" value="1"/>
</dbReference>
<dbReference type="Pfam" id="PF11987">
    <property type="entry name" value="IF-2"/>
    <property type="match status" value="1"/>
</dbReference>
<dbReference type="Pfam" id="PF04760">
    <property type="entry name" value="IF2_N"/>
    <property type="match status" value="1"/>
</dbReference>
<dbReference type="SUPFAM" id="SSF52156">
    <property type="entry name" value="Initiation factor IF2/eIF5b, domain 3"/>
    <property type="match status" value="1"/>
</dbReference>
<dbReference type="SUPFAM" id="SSF52540">
    <property type="entry name" value="P-loop containing nucleoside triphosphate hydrolases"/>
    <property type="match status" value="1"/>
</dbReference>
<dbReference type="SUPFAM" id="SSF50447">
    <property type="entry name" value="Translation proteins"/>
    <property type="match status" value="2"/>
</dbReference>
<dbReference type="PROSITE" id="PS51722">
    <property type="entry name" value="G_TR_2"/>
    <property type="match status" value="1"/>
</dbReference>
<dbReference type="PROSITE" id="PS01176">
    <property type="entry name" value="IF2"/>
    <property type="match status" value="1"/>
</dbReference>
<name>IF2_ANASK</name>
<keyword id="KW-0963">Cytoplasm</keyword>
<keyword id="KW-0342">GTP-binding</keyword>
<keyword id="KW-0396">Initiation factor</keyword>
<keyword id="KW-0547">Nucleotide-binding</keyword>
<keyword id="KW-0648">Protein biosynthesis</keyword>
<feature type="chain" id="PRO_1000093757" description="Translation initiation factor IF-2">
    <location>
        <begin position="1"/>
        <end position="946"/>
    </location>
</feature>
<feature type="domain" description="tr-type G">
    <location>
        <begin position="445"/>
        <end position="614"/>
    </location>
</feature>
<feature type="region of interest" description="Disordered" evidence="3">
    <location>
        <begin position="58"/>
        <end position="250"/>
    </location>
</feature>
<feature type="region of interest" description="Disordered" evidence="3">
    <location>
        <begin position="301"/>
        <end position="324"/>
    </location>
</feature>
<feature type="region of interest" description="G1" evidence="1">
    <location>
        <begin position="454"/>
        <end position="461"/>
    </location>
</feature>
<feature type="region of interest" description="G2" evidence="1">
    <location>
        <begin position="479"/>
        <end position="483"/>
    </location>
</feature>
<feature type="region of interest" description="G3" evidence="1">
    <location>
        <begin position="500"/>
        <end position="503"/>
    </location>
</feature>
<feature type="region of interest" description="G4" evidence="1">
    <location>
        <begin position="554"/>
        <end position="557"/>
    </location>
</feature>
<feature type="region of interest" description="G5" evidence="1">
    <location>
        <begin position="590"/>
        <end position="592"/>
    </location>
</feature>
<feature type="compositionally biased region" description="Low complexity" evidence="3">
    <location>
        <begin position="102"/>
        <end position="165"/>
    </location>
</feature>
<feature type="compositionally biased region" description="Low complexity" evidence="3">
    <location>
        <begin position="174"/>
        <end position="185"/>
    </location>
</feature>
<feature type="compositionally biased region" description="Pro residues" evidence="3">
    <location>
        <begin position="186"/>
        <end position="211"/>
    </location>
</feature>
<feature type="compositionally biased region" description="Low complexity" evidence="3">
    <location>
        <begin position="212"/>
        <end position="229"/>
    </location>
</feature>
<feature type="binding site" evidence="2">
    <location>
        <begin position="454"/>
        <end position="461"/>
    </location>
    <ligand>
        <name>GTP</name>
        <dbReference type="ChEBI" id="CHEBI:37565"/>
    </ligand>
</feature>
<feature type="binding site" evidence="2">
    <location>
        <begin position="500"/>
        <end position="504"/>
    </location>
    <ligand>
        <name>GTP</name>
        <dbReference type="ChEBI" id="CHEBI:37565"/>
    </ligand>
</feature>
<feature type="binding site" evidence="2">
    <location>
        <begin position="554"/>
        <end position="557"/>
    </location>
    <ligand>
        <name>GTP</name>
        <dbReference type="ChEBI" id="CHEBI:37565"/>
    </ligand>
</feature>
<gene>
    <name evidence="2" type="primary">infB</name>
    <name type="ordered locus">AnaeK_1162</name>
</gene>
<sequence length="946" mass="100698">MSKKRVHELGKQLKEQGIELSNQELVEKLHALGYLEVKSHSSSLEDDQAHAAYEKILAERKPKPAPVRPSGPGFVVRKRAHVEPPTVTAPAAPPPAEPEYAEPPQAEQAYEPEPQEAQPEAAPEPVAAPEQPAEAAPLAAQAAPSPGAEAAAPAAPQAQPAQPAAPVAPPAPSAQPSAPQPAAAQPRPPQPPMPSRPPPAGYRPAPPPGARPPMSAAPGAPAQPGAAAQPPRPPVDPRTLRPTSTQAVVISRPLVPVRRVTPPTSARQQFPVAPGPRALGEVRELKVVPGSLGREREFIDVSRDKRRGRQPGRPISEEQAKSLSGKELLQAAISDRAYIPIRGKKKKPTKKGAKTQITEKAEHKKVIRIEESISVSELSQVMGVKASDLIRKLMQMGKMVTINAQIDADTAAILALEHGYTVEKKGFEVEEFIPEVEVDESKLVIRPPVVTVMGHVDHGKTSLLDAIRQADVAAGEAGGITQHIGAYSVNTPQGPITFLDTPGHEAFTAMRQRGAQVTDLVVLVVAADDGVMPQTVESIKAAKAAGVTILVAINKVDKPQAAPERVMQQLTEYELVAEQWGGTTIMLPVSARTKQGIPELLEYIALQSEVLELKANPDKLAAGRVIEAKLEKGRGPVATVLVEEGTLRVGDALVTGVHFGRVRAMMNERGEQVDNVGPGYPVEVLGLSGVPVAGDEFDVVEDEKAAKEVAQHRATKQRQKELGGVKKATLEDLFAKAKTSGQKVLNLVVKADVQGSSEAVSQALEKAATKKVGVKILESAVGAITKSDVLTAAAGNAVIVGFNTKPESEIENIASQQGVKILMFGIIYEAVDRIREEMAGLLEPIIKEKPLGKAEVRQVFNIPRVGQIAGSAVTEGVVKRAGHVRVVRDRKVIFTGKIGSLKRVKDDVREVAQGFECGIGVDGFSDVKQGDILEVYELEEIRPSLD</sequence>
<reference key="1">
    <citation type="submission" date="2008-08" db="EMBL/GenBank/DDBJ databases">
        <title>Complete sequence of Anaeromyxobacter sp. K.</title>
        <authorList>
            <consortium name="US DOE Joint Genome Institute"/>
            <person name="Lucas S."/>
            <person name="Copeland A."/>
            <person name="Lapidus A."/>
            <person name="Glavina del Rio T."/>
            <person name="Dalin E."/>
            <person name="Tice H."/>
            <person name="Bruce D."/>
            <person name="Goodwin L."/>
            <person name="Pitluck S."/>
            <person name="Saunders E."/>
            <person name="Brettin T."/>
            <person name="Detter J.C."/>
            <person name="Han C."/>
            <person name="Larimer F."/>
            <person name="Land M."/>
            <person name="Hauser L."/>
            <person name="Kyrpides N."/>
            <person name="Ovchinnikiva G."/>
            <person name="Beliaev A."/>
        </authorList>
    </citation>
    <scope>NUCLEOTIDE SEQUENCE [LARGE SCALE GENOMIC DNA]</scope>
    <source>
        <strain>K</strain>
    </source>
</reference>
<accession>B4UHG0</accession>
<organism>
    <name type="scientific">Anaeromyxobacter sp. (strain K)</name>
    <dbReference type="NCBI Taxonomy" id="447217"/>
    <lineage>
        <taxon>Bacteria</taxon>
        <taxon>Pseudomonadati</taxon>
        <taxon>Myxococcota</taxon>
        <taxon>Myxococcia</taxon>
        <taxon>Myxococcales</taxon>
        <taxon>Cystobacterineae</taxon>
        <taxon>Anaeromyxobacteraceae</taxon>
        <taxon>Anaeromyxobacter</taxon>
    </lineage>
</organism>
<protein>
    <recommendedName>
        <fullName evidence="2">Translation initiation factor IF-2</fullName>
    </recommendedName>
</protein>
<comment type="function">
    <text evidence="2">One of the essential components for the initiation of protein synthesis. Protects formylmethionyl-tRNA from spontaneous hydrolysis and promotes its binding to the 30S ribosomal subunits. Also involved in the hydrolysis of GTP during the formation of the 70S ribosomal complex.</text>
</comment>
<comment type="subcellular location">
    <subcellularLocation>
        <location evidence="2">Cytoplasm</location>
    </subcellularLocation>
</comment>
<comment type="similarity">
    <text evidence="2">Belongs to the TRAFAC class translation factor GTPase superfamily. Classic translation factor GTPase family. IF-2 subfamily.</text>
</comment>
<proteinExistence type="inferred from homology"/>